<protein>
    <recommendedName>
        <fullName>5'-3' exoribonuclease 2</fullName>
        <ecNumber>3.1.13.-</ecNumber>
    </recommendedName>
</protein>
<keyword id="KW-0007">Acetylation</keyword>
<keyword id="KW-0238">DNA-binding</keyword>
<keyword id="KW-0269">Exonuclease</keyword>
<keyword id="KW-0378">Hydrolase</keyword>
<keyword id="KW-0479">Metal-binding</keyword>
<keyword id="KW-0488">Methylation</keyword>
<keyword id="KW-0507">mRNA processing</keyword>
<keyword id="KW-0540">Nuclease</keyword>
<keyword id="KW-0539">Nucleus</keyword>
<keyword id="KW-0597">Phosphoprotein</keyword>
<keyword id="KW-1185">Reference proteome</keyword>
<keyword id="KW-0694">RNA-binding</keyword>
<keyword id="KW-0804">Transcription</keyword>
<keyword id="KW-0805">Transcription regulation</keyword>
<keyword id="KW-0806">Transcription termination</keyword>
<keyword id="KW-0862">Zinc</keyword>
<keyword id="KW-0863">Zinc-finger</keyword>
<accession>Q5R4L5</accession>
<feature type="chain" id="PRO_0000249912" description="5'-3' exoribonuclease 2">
    <location>
        <begin position="1"/>
        <end position="950"/>
    </location>
</feature>
<feature type="zinc finger region" description="CCHC-type">
    <location>
        <begin position="261"/>
        <end position="278"/>
    </location>
</feature>
<feature type="region of interest" description="Disordered" evidence="3">
    <location>
        <begin position="408"/>
        <end position="508"/>
    </location>
</feature>
<feature type="region of interest" description="Disordered" evidence="3">
    <location>
        <begin position="912"/>
        <end position="950"/>
    </location>
</feature>
<feature type="compositionally biased region" description="Basic residues" evidence="3">
    <location>
        <begin position="416"/>
        <end position="426"/>
    </location>
</feature>
<feature type="compositionally biased region" description="Polar residues" evidence="3">
    <location>
        <begin position="445"/>
        <end position="458"/>
    </location>
</feature>
<feature type="compositionally biased region" description="Low complexity" evidence="3">
    <location>
        <begin position="468"/>
        <end position="482"/>
    </location>
</feature>
<feature type="compositionally biased region" description="Basic and acidic residues" evidence="3">
    <location>
        <begin position="920"/>
        <end position="937"/>
    </location>
</feature>
<feature type="modified residue" description="N6-acetyllysine" evidence="1">
    <location>
        <position position="286"/>
    </location>
</feature>
<feature type="modified residue" description="Phosphothreonine" evidence="2">
    <location>
        <position position="439"/>
    </location>
</feature>
<feature type="modified residue" description="Phosphoserine" evidence="2">
    <location>
        <position position="448"/>
    </location>
</feature>
<feature type="modified residue" description="Phosphoserine" evidence="2">
    <location>
        <position position="471"/>
    </location>
</feature>
<feature type="modified residue" description="Phosphoserine" evidence="2">
    <location>
        <position position="473"/>
    </location>
</feature>
<feature type="modified residue" description="Phosphoserine" evidence="2">
    <location>
        <position position="475"/>
    </location>
</feature>
<feature type="modified residue" description="Phosphoserine" evidence="1">
    <location>
        <position position="482"/>
    </location>
</feature>
<feature type="modified residue" description="Phosphoserine" evidence="2">
    <location>
        <position position="487"/>
    </location>
</feature>
<feature type="modified residue" description="Phosphoserine" evidence="2">
    <location>
        <position position="499"/>
    </location>
</feature>
<feature type="modified residue" description="Phosphoserine" evidence="2">
    <location>
        <position position="501"/>
    </location>
</feature>
<feature type="modified residue" description="Phosphoserine" evidence="2">
    <location>
        <position position="678"/>
    </location>
</feature>
<feature type="modified residue" description="Asymmetric dimethylarginine; alternate" evidence="2">
    <location>
        <position position="824"/>
    </location>
</feature>
<feature type="modified residue" description="Omega-N-methylarginine; alternate" evidence="2">
    <location>
        <position position="824"/>
    </location>
</feature>
<feature type="modified residue" description="Asymmetric dimethylarginine; alternate" evidence="2">
    <location>
        <position position="847"/>
    </location>
</feature>
<feature type="modified residue" description="Omega-N-methylarginine; alternate" evidence="2">
    <location>
        <position position="847"/>
    </location>
</feature>
<feature type="modified residue" description="Asymmetric dimethylarginine; alternate" evidence="2">
    <location>
        <position position="851"/>
    </location>
</feature>
<feature type="modified residue" description="Omega-N-methylarginine; alternate" evidence="2">
    <location>
        <position position="851"/>
    </location>
</feature>
<feature type="modified residue" description="Asymmetric dimethylarginine" evidence="1">
    <location>
        <position position="880"/>
    </location>
</feature>
<feature type="modified residue" description="Asymmetric dimethylarginine; alternate" evidence="1">
    <location>
        <position position="883"/>
    </location>
</feature>
<feature type="modified residue" description="Omega-N-methylarginine; alternate" evidence="2">
    <location>
        <position position="883"/>
    </location>
</feature>
<feature type="modified residue" description="Omega-N-methylarginine" evidence="2">
    <location>
        <position position="895"/>
    </location>
</feature>
<feature type="modified residue" description="Asymmetric dimethylarginine; alternate" evidence="2">
    <location>
        <position position="946"/>
    </location>
</feature>
<feature type="modified residue" description="Omega-N-methylarginine; alternate" evidence="2">
    <location>
        <position position="946"/>
    </location>
</feature>
<reference key="1">
    <citation type="submission" date="2004-11" db="EMBL/GenBank/DDBJ databases">
        <authorList>
            <consortium name="The German cDNA consortium"/>
        </authorList>
    </citation>
    <scope>NUCLEOTIDE SEQUENCE [LARGE SCALE MRNA]</scope>
    <source>
        <tissue>Brain cortex</tissue>
    </source>
</reference>
<dbReference type="EC" id="3.1.13.-"/>
<dbReference type="EMBL" id="CR861231">
    <property type="protein sequence ID" value="CAH93301.1"/>
    <property type="molecule type" value="mRNA"/>
</dbReference>
<dbReference type="RefSeq" id="NP_001126942.1">
    <property type="nucleotide sequence ID" value="NM_001133470.1"/>
</dbReference>
<dbReference type="SMR" id="Q5R4L5"/>
<dbReference type="FunCoup" id="Q5R4L5">
    <property type="interactions" value="4326"/>
</dbReference>
<dbReference type="STRING" id="9601.ENSPPYP00000012020"/>
<dbReference type="GeneID" id="100173960"/>
<dbReference type="KEGG" id="pon:100173960"/>
<dbReference type="CTD" id="22803"/>
<dbReference type="eggNOG" id="KOG2044">
    <property type="taxonomic scope" value="Eukaryota"/>
</dbReference>
<dbReference type="InParanoid" id="Q5R4L5"/>
<dbReference type="OrthoDB" id="372487at2759"/>
<dbReference type="Proteomes" id="UP000001595">
    <property type="component" value="Unplaced"/>
</dbReference>
<dbReference type="GO" id="GO:0005730">
    <property type="term" value="C:nucleolus"/>
    <property type="evidence" value="ECO:0000250"/>
    <property type="project" value="UniProtKB"/>
</dbReference>
<dbReference type="GO" id="GO:0008409">
    <property type="term" value="F:5'-3' exonuclease activity"/>
    <property type="evidence" value="ECO:0000250"/>
    <property type="project" value="UniProtKB"/>
</dbReference>
<dbReference type="GO" id="GO:0004534">
    <property type="term" value="F:5'-3' RNA exonuclease activity"/>
    <property type="evidence" value="ECO:0007669"/>
    <property type="project" value="InterPro"/>
</dbReference>
<dbReference type="GO" id="GO:0003723">
    <property type="term" value="F:RNA binding"/>
    <property type="evidence" value="ECO:0007669"/>
    <property type="project" value="UniProtKB-KW"/>
</dbReference>
<dbReference type="GO" id="GO:0001147">
    <property type="term" value="F:transcription termination site sequence-specific DNA binding"/>
    <property type="evidence" value="ECO:0000250"/>
    <property type="project" value="UniProtKB"/>
</dbReference>
<dbReference type="GO" id="GO:0008270">
    <property type="term" value="F:zinc ion binding"/>
    <property type="evidence" value="ECO:0007669"/>
    <property type="project" value="UniProtKB-KW"/>
</dbReference>
<dbReference type="GO" id="GO:0006397">
    <property type="term" value="P:mRNA processing"/>
    <property type="evidence" value="ECO:0007669"/>
    <property type="project" value="UniProtKB-KW"/>
</dbReference>
<dbReference type="GO" id="GO:0000956">
    <property type="term" value="P:nuclear-transcribed mRNA catabolic process"/>
    <property type="evidence" value="ECO:0007669"/>
    <property type="project" value="TreeGrafter"/>
</dbReference>
<dbReference type="GO" id="GO:0006369">
    <property type="term" value="P:termination of RNA polymerase II transcription"/>
    <property type="evidence" value="ECO:0000250"/>
    <property type="project" value="UniProtKB"/>
</dbReference>
<dbReference type="CDD" id="cd18673">
    <property type="entry name" value="PIN_XRN1-2-like"/>
    <property type="match status" value="1"/>
</dbReference>
<dbReference type="FunFam" id="1.25.40.1050:FF:000002">
    <property type="entry name" value="5'-3' exoribonuclease"/>
    <property type="match status" value="1"/>
</dbReference>
<dbReference type="FunFam" id="3.40.50.12390:FF:000001">
    <property type="entry name" value="5'-3' exoribonuclease"/>
    <property type="match status" value="1"/>
</dbReference>
<dbReference type="FunFam" id="3.40.50.12390:FF:000003">
    <property type="entry name" value="5'-3' exoribonuclease"/>
    <property type="match status" value="1"/>
</dbReference>
<dbReference type="Gene3D" id="1.25.40.1050">
    <property type="match status" value="1"/>
</dbReference>
<dbReference type="Gene3D" id="3.40.50.12390">
    <property type="match status" value="2"/>
</dbReference>
<dbReference type="InterPro" id="IPR027073">
    <property type="entry name" value="5_3_exoribonuclease"/>
</dbReference>
<dbReference type="InterPro" id="IPR041412">
    <property type="entry name" value="Xrn1_helical"/>
</dbReference>
<dbReference type="InterPro" id="IPR004859">
    <property type="entry name" value="Xrn1_N"/>
</dbReference>
<dbReference type="InterPro" id="IPR017151">
    <property type="entry name" value="Xrn2/3/4"/>
</dbReference>
<dbReference type="PANTHER" id="PTHR12341:SF41">
    <property type="entry name" value="5'-3' EXORIBONUCLEASE 2"/>
    <property type="match status" value="1"/>
</dbReference>
<dbReference type="PANTHER" id="PTHR12341">
    <property type="entry name" value="5'-&gt;3' EXORIBONUCLEASE"/>
    <property type="match status" value="1"/>
</dbReference>
<dbReference type="Pfam" id="PF17846">
    <property type="entry name" value="XRN_M"/>
    <property type="match status" value="1"/>
</dbReference>
<dbReference type="Pfam" id="PF03159">
    <property type="entry name" value="XRN_N"/>
    <property type="match status" value="1"/>
</dbReference>
<dbReference type="PIRSF" id="PIRSF037239">
    <property type="entry name" value="Exonuclease_Xrn2"/>
    <property type="match status" value="1"/>
</dbReference>
<proteinExistence type="evidence at transcript level"/>
<comment type="function">
    <text evidence="2">Possesses 5'-&gt;3' exoribonuclease activity. May promote the termination of transcription by RNA polymerase II. During transcription termination, cleavage at the polyadenylation site liberates a 5' fragment which is subsequently processed to form the mature mRNA and a 3' fragment which remains attached to the elongating polymerase. The processive degradation of this 3' fragment by this protein may promote termination of transcription. Binds to RNA polymerase II (RNAp II) transcription termination R-loops formed by G-rich pause sites (By similarity).</text>
</comment>
<comment type="subunit">
    <text evidence="2">Interacts with POLR2A and SMN1/SMN2. Interacts with CDKN2AIP and NKRF. Interacts with CDKN2AIPNL; the interaction is direct. Interacts with TRIM71 (via NHL repeats) in an RNA-dependent manner (By similarity). Interacts with DHX34; the interaction is RNA-independent (By similarity).</text>
</comment>
<comment type="subcellular location">
    <subcellularLocation>
        <location evidence="2">Nucleus</location>
        <location evidence="2">Nucleolus</location>
    </subcellularLocation>
</comment>
<comment type="similarity">
    <text evidence="4">Belongs to the 5'-3' exonuclease family. XRN2/RAT1 subfamily.</text>
</comment>
<evidence type="ECO:0000250" key="1">
    <source>
        <dbReference type="UniProtKB" id="Q9DBR1"/>
    </source>
</evidence>
<evidence type="ECO:0000250" key="2">
    <source>
        <dbReference type="UniProtKB" id="Q9H0D6"/>
    </source>
</evidence>
<evidence type="ECO:0000256" key="3">
    <source>
        <dbReference type="SAM" id="MobiDB-lite"/>
    </source>
</evidence>
<evidence type="ECO:0000305" key="4"/>
<organism>
    <name type="scientific">Pongo abelii</name>
    <name type="common">Sumatran orangutan</name>
    <name type="synonym">Pongo pygmaeus abelii</name>
    <dbReference type="NCBI Taxonomy" id="9601"/>
    <lineage>
        <taxon>Eukaryota</taxon>
        <taxon>Metazoa</taxon>
        <taxon>Chordata</taxon>
        <taxon>Craniata</taxon>
        <taxon>Vertebrata</taxon>
        <taxon>Euteleostomi</taxon>
        <taxon>Mammalia</taxon>
        <taxon>Eutheria</taxon>
        <taxon>Euarchontoglires</taxon>
        <taxon>Primates</taxon>
        <taxon>Haplorrhini</taxon>
        <taxon>Catarrhini</taxon>
        <taxon>Hominidae</taxon>
        <taxon>Pongo</taxon>
    </lineage>
</organism>
<sequence>MGVPAFFRWLSRKYPSIIVNCVEEKPKECNGVKIPVDASKPNPNDVEFDNLYLDMNGIIHPCTHPEDKPAPKNEDEMMVAIFEYIDRLFSIVRPRRLLYMAIDGVAPRAKMNQQRSRRFRASKEGMEAAVEKQRVREEILAKGGFLPPEEIKERFDSNCITPGTEFMDNLAKCLRYYIADRLNNDPGWKNLTVILSDASAPGEGEHKIMDYIRRQRAQPNHDPNTHHCLCGADADLIMLGLATHEPNFTIIREEFKPNKPKPCGLCNQFGHEVKDCEGLLREKKVKHDELADSLPCAEGEFIFLRLNVLREYLERELTMASLPFTFDVERSIDDWVFMCFFVGNDFLPHLPSLEIRENAIDRLVNIYKNVVHKTGGYLTESGYVNLQRVQMIMLAVGEVEDSIFKKRKDDEDSFRRRQKEKRKRMKRDQPAFTPSGILTPHALGSRNSPGSQVASNPRQAAYEMRMQNNSSPSISPNTSFTSDGSPSPIGGIKRKAEDSDSEPEPEDNVRLWEAGWKQRYYKNKFDADAADEKFRRKVVQSYVEGLCWVLRYYYQGCASWKWYYPFHYAPFASDFEGIADMPSDFEKGTKPFKPLEQLMGVFPAASGNFLPPSWRKLMSDPDSSIIDFYPEDFAIDLNGKKYAWQGVALLPFVDERRLRAALEEVYPDLTPEETRRNSLGGDVLFVGKHHPLHDFILELYQTGSTEPVDVPPELCHGIQGKFSLDEEAILPDQIVCSPVPMLRDLTQNTVVSINFKDPQFAEDYIFKAVMLPGARKPAAVLKPSDWEKSSNGRQWKPQLGFNRDRRPVHLDQAAFRTLGHVMPRGSGTGIYSNAAPPPATYQGNLYRPLLRGQAQIPKLMSNMRPQDSWRGPPPLFQQQRFDRGVGAEPLLPWNRMLQTQNAAFQPNQYQMLAGPGGYPPRRDDRGGRQGYPREGRKYPLSPPSGRYNWN</sequence>
<name>XRN2_PONAB</name>
<gene>
    <name type="primary">XRN2</name>
</gene>